<comment type="function">
    <text evidence="1">Mediates the nuclear export of encapsidated genomic RNAs (ribonucleoproteins, RNPs). Acts as an adapter between viral RNPs complexes and the nuclear export machinery of the cell. Possesses no intrinsic RNA-binding activity, but includes a C-terminal M1-binding domain. This domain is believed to allow recognition of RNPs bound to the protein M1. Since protein M1 is not available in large quantities before late stages of infection, such an indirect recognition mechanism probably ensures that genomic RNPs are not exported from the host nucleus until sufficient quantities of viral mRNA and progeny genomic RNA have been synthesized. Furthermore, the RNPs enter the host cytoplasm only when associated with the M1 protein that is necessary to guide them to the plasma membrane. May down-regulate viral RNA synthesis when overproduced.</text>
</comment>
<comment type="subunit">
    <text evidence="1">Interacts with protein M1. May interact with host nucleoporin RAB/HRB and exportin XPO1/CRM1.</text>
</comment>
<comment type="subcellular location">
    <subcellularLocation>
        <location evidence="1">Virion</location>
    </subcellularLocation>
    <subcellularLocation>
        <location evidence="1">Host nucleus</location>
    </subcellularLocation>
</comment>
<comment type="alternative products">
    <event type="alternative splicing"/>
    <isoform>
        <id>Q76S20-1</id>
        <name>NEP</name>
        <name>NS2</name>
        <sequence type="displayed"/>
    </isoform>
    <isoform>
        <id>O41665-1</id>
        <name>NS1</name>
        <sequence type="external"/>
    </isoform>
</comment>
<comment type="similarity">
    <text evidence="1">Belongs to the influenza viruses NEP family.</text>
</comment>
<proteinExistence type="inferred from homology"/>
<organismHost>
    <name type="scientific">Aves</name>
    <dbReference type="NCBI Taxonomy" id="8782"/>
</organismHost>
<dbReference type="EMBL" id="U85392">
    <property type="protein sequence ID" value="AAC40684.1"/>
    <property type="molecule type" value="Genomic_RNA"/>
</dbReference>
<dbReference type="EMBL" id="CY015093">
    <property type="protein sequence ID" value="ABI85123.1"/>
    <property type="molecule type" value="Genomic_RNA"/>
</dbReference>
<dbReference type="SMR" id="Q76S20"/>
<dbReference type="Proteomes" id="UP000008583">
    <property type="component" value="Genome"/>
</dbReference>
<dbReference type="GO" id="GO:0042025">
    <property type="term" value="C:host cell nucleus"/>
    <property type="evidence" value="ECO:0007669"/>
    <property type="project" value="UniProtKB-SubCell"/>
</dbReference>
<dbReference type="GO" id="GO:0044423">
    <property type="term" value="C:virion component"/>
    <property type="evidence" value="ECO:0007669"/>
    <property type="project" value="UniProtKB-UniRule"/>
</dbReference>
<dbReference type="GO" id="GO:0039675">
    <property type="term" value="P:exit of virus from host cell nucleus through nuclear pore"/>
    <property type="evidence" value="ECO:0007669"/>
    <property type="project" value="UniProtKB-UniRule"/>
</dbReference>
<dbReference type="Gene3D" id="1.10.287.230">
    <property type="match status" value="1"/>
</dbReference>
<dbReference type="Gene3D" id="1.10.287.10">
    <property type="entry name" value="S15/NS1, RNA-binding"/>
    <property type="match status" value="1"/>
</dbReference>
<dbReference type="HAMAP" id="MF_04067">
    <property type="entry name" value="INFV_NEP"/>
    <property type="match status" value="1"/>
</dbReference>
<dbReference type="InterPro" id="IPR000968">
    <property type="entry name" value="Flu_NS2"/>
</dbReference>
<dbReference type="Pfam" id="PF00601">
    <property type="entry name" value="Flu_NS2"/>
    <property type="match status" value="1"/>
</dbReference>
<dbReference type="SUPFAM" id="SSF101156">
    <property type="entry name" value="Nonstructural protein ns2, Nep, M1-binding domain"/>
    <property type="match status" value="1"/>
</dbReference>
<feature type="chain" id="PRO_0000324225" description="Nuclear export protein">
    <location>
        <begin position="1"/>
        <end position="121"/>
    </location>
</feature>
<feature type="short sequence motif" description="Nuclear export signal" evidence="1">
    <location>
        <begin position="12"/>
        <end position="21"/>
    </location>
</feature>
<feature type="short sequence motif" description="Nuclear export signal" evidence="1">
    <location>
        <begin position="85"/>
        <end position="94"/>
    </location>
</feature>
<evidence type="ECO:0000255" key="1">
    <source>
        <dbReference type="HAMAP-Rule" id="MF_04067"/>
    </source>
</evidence>
<organism>
    <name type="scientific">Influenza A virus (strain A/Turkey/Ireland/1378/1983 H5N8)</name>
    <dbReference type="NCBI Taxonomy" id="380285"/>
    <lineage>
        <taxon>Viruses</taxon>
        <taxon>Riboviria</taxon>
        <taxon>Orthornavirae</taxon>
        <taxon>Negarnaviricota</taxon>
        <taxon>Polyploviricotina</taxon>
        <taxon>Insthoviricetes</taxon>
        <taxon>Articulavirales</taxon>
        <taxon>Orthomyxoviridae</taxon>
        <taxon>Alphainfluenzavirus</taxon>
        <taxon>Alphainfluenzavirus influenzae</taxon>
        <taxon>Influenza A virus</taxon>
    </lineage>
</organism>
<keyword id="KW-0025">Alternative splicing</keyword>
<keyword id="KW-1048">Host nucleus</keyword>
<keyword id="KW-0945">Host-virus interaction</keyword>
<keyword id="KW-0813">Transport</keyword>
<keyword id="KW-0946">Virion</keyword>
<sequence length="121" mass="14338">MDSNTVSSFQDILMRMSKMQLGSSSEDLNGMITQFESLKLYRDSLGEAVMRMGDLHSLQSRNGKWREQLSQKFEEIRWLIEEVRHRLKITENSFEQITFMQALQLLLEVEQEIRTFSFQLI</sequence>
<accession>Q76S20</accession>
<gene>
    <name evidence="1" type="primary">NS</name>
</gene>
<protein>
    <recommendedName>
        <fullName evidence="1">Nuclear export protein</fullName>
        <shortName evidence="1">NEP</shortName>
    </recommendedName>
    <alternativeName>
        <fullName evidence="1">Non-structural protein 2</fullName>
        <shortName evidence="1">NS2</shortName>
    </alternativeName>
</protein>
<name>NEP_I83A4</name>
<reference key="1">
    <citation type="journal article" date="1997" name="Virus Res.">
        <title>Evolution of H5 subtype avian influenza A viruses in North America.</title>
        <authorList>
            <person name="Garcia M."/>
            <person name="Suarez D.L."/>
            <person name="Crawford J.M."/>
            <person name="Latimer J.W."/>
            <person name="Slemons R.D."/>
            <person name="Swayne D.E."/>
            <person name="Purdue M.L."/>
        </authorList>
    </citation>
    <scope>NUCLEOTIDE SEQUENCE [GENOMIC RNA]</scope>
</reference>
<reference key="2">
    <citation type="journal article" date="2006" name="Science">
        <title>Large-scale sequence analysis of avian influenza isolates.</title>
        <authorList>
            <person name="Obenauer J.C."/>
            <person name="Denson J."/>
            <person name="Mehta P.K."/>
            <person name="Su X."/>
            <person name="Mukatira S."/>
            <person name="Finkelstein D.B."/>
            <person name="Xu X."/>
            <person name="Wang J."/>
            <person name="Ma J."/>
            <person name="Fan Y."/>
            <person name="Rakestraw K.M."/>
            <person name="Webster R.G."/>
            <person name="Hoffmann E."/>
            <person name="Krauss S."/>
            <person name="Zheng J."/>
            <person name="Zhang Z."/>
            <person name="Naeve C.W."/>
        </authorList>
    </citation>
    <scope>NUCLEOTIDE SEQUENCE [GENOMIC RNA]</scope>
</reference>